<sequence length="139" mass="15394">MSNRTVMGFDFGTKSIGAAIGQEVTGTARPLASFKAKDGIPDWSQIEKIIKEWQPDLVVVGLPLNMDGTEQLVTTQAKKFANRLHGRFGVQIALHDERLSTVEARAHLFEQGGYRSLDKGSVDATSAVIILESWFERQY</sequence>
<gene>
    <name evidence="1" type="primary">yqgF</name>
    <name type="ordered locus">PMI0338</name>
</gene>
<feature type="chain" id="PRO_1000131058" description="Putative pre-16S rRNA nuclease">
    <location>
        <begin position="1"/>
        <end position="139"/>
    </location>
</feature>
<comment type="function">
    <text evidence="1">Could be a nuclease involved in processing of the 5'-end of pre-16S rRNA.</text>
</comment>
<comment type="subcellular location">
    <subcellularLocation>
        <location evidence="1">Cytoplasm</location>
    </subcellularLocation>
</comment>
<comment type="similarity">
    <text evidence="1">Belongs to the YqgF nuclease family.</text>
</comment>
<proteinExistence type="inferred from homology"/>
<dbReference type="EC" id="3.1.-.-" evidence="1"/>
<dbReference type="EMBL" id="AM942759">
    <property type="protein sequence ID" value="CAR40879.1"/>
    <property type="molecule type" value="Genomic_DNA"/>
</dbReference>
<dbReference type="SMR" id="B4EUS0"/>
<dbReference type="EnsemblBacteria" id="CAR40879">
    <property type="protein sequence ID" value="CAR40879"/>
    <property type="gene ID" value="PMI0338"/>
</dbReference>
<dbReference type="GeneID" id="6801896"/>
<dbReference type="KEGG" id="pmr:PMI0338"/>
<dbReference type="eggNOG" id="COG0816">
    <property type="taxonomic scope" value="Bacteria"/>
</dbReference>
<dbReference type="HOGENOM" id="CLU_098240_3_0_6"/>
<dbReference type="Proteomes" id="UP000008319">
    <property type="component" value="Chromosome"/>
</dbReference>
<dbReference type="GO" id="GO:0005829">
    <property type="term" value="C:cytosol"/>
    <property type="evidence" value="ECO:0007669"/>
    <property type="project" value="TreeGrafter"/>
</dbReference>
<dbReference type="GO" id="GO:0004518">
    <property type="term" value="F:nuclease activity"/>
    <property type="evidence" value="ECO:0007669"/>
    <property type="project" value="UniProtKB-KW"/>
</dbReference>
<dbReference type="GO" id="GO:0000967">
    <property type="term" value="P:rRNA 5'-end processing"/>
    <property type="evidence" value="ECO:0007669"/>
    <property type="project" value="UniProtKB-UniRule"/>
</dbReference>
<dbReference type="CDD" id="cd16964">
    <property type="entry name" value="YqgF"/>
    <property type="match status" value="1"/>
</dbReference>
<dbReference type="FunFam" id="3.30.420.140:FF:000002">
    <property type="entry name" value="Putative pre-16S rRNA nuclease"/>
    <property type="match status" value="1"/>
</dbReference>
<dbReference type="Gene3D" id="3.30.420.140">
    <property type="entry name" value="YqgF/RNase H-like domain"/>
    <property type="match status" value="1"/>
</dbReference>
<dbReference type="HAMAP" id="MF_00651">
    <property type="entry name" value="Nuclease_YqgF"/>
    <property type="match status" value="1"/>
</dbReference>
<dbReference type="InterPro" id="IPR012337">
    <property type="entry name" value="RNaseH-like_sf"/>
</dbReference>
<dbReference type="InterPro" id="IPR005227">
    <property type="entry name" value="YqgF"/>
</dbReference>
<dbReference type="InterPro" id="IPR006641">
    <property type="entry name" value="YqgF/RNaseH-like_dom"/>
</dbReference>
<dbReference type="InterPro" id="IPR037027">
    <property type="entry name" value="YqgF/RNaseH-like_dom_sf"/>
</dbReference>
<dbReference type="NCBIfam" id="TIGR00250">
    <property type="entry name" value="RNAse_H_YqgF"/>
    <property type="match status" value="1"/>
</dbReference>
<dbReference type="PANTHER" id="PTHR33317">
    <property type="entry name" value="POLYNUCLEOTIDYL TRANSFERASE, RIBONUCLEASE H-LIKE SUPERFAMILY PROTEIN"/>
    <property type="match status" value="1"/>
</dbReference>
<dbReference type="PANTHER" id="PTHR33317:SF4">
    <property type="entry name" value="POLYNUCLEOTIDYL TRANSFERASE, RIBONUCLEASE H-LIKE SUPERFAMILY PROTEIN"/>
    <property type="match status" value="1"/>
</dbReference>
<dbReference type="Pfam" id="PF03652">
    <property type="entry name" value="RuvX"/>
    <property type="match status" value="1"/>
</dbReference>
<dbReference type="SMART" id="SM00732">
    <property type="entry name" value="YqgFc"/>
    <property type="match status" value="1"/>
</dbReference>
<dbReference type="SUPFAM" id="SSF53098">
    <property type="entry name" value="Ribonuclease H-like"/>
    <property type="match status" value="1"/>
</dbReference>
<name>YQGF_PROMH</name>
<organism>
    <name type="scientific">Proteus mirabilis (strain HI4320)</name>
    <dbReference type="NCBI Taxonomy" id="529507"/>
    <lineage>
        <taxon>Bacteria</taxon>
        <taxon>Pseudomonadati</taxon>
        <taxon>Pseudomonadota</taxon>
        <taxon>Gammaproteobacteria</taxon>
        <taxon>Enterobacterales</taxon>
        <taxon>Morganellaceae</taxon>
        <taxon>Proteus</taxon>
    </lineage>
</organism>
<protein>
    <recommendedName>
        <fullName evidence="1">Putative pre-16S rRNA nuclease</fullName>
        <ecNumber evidence="1">3.1.-.-</ecNumber>
    </recommendedName>
</protein>
<evidence type="ECO:0000255" key="1">
    <source>
        <dbReference type="HAMAP-Rule" id="MF_00651"/>
    </source>
</evidence>
<reference key="1">
    <citation type="journal article" date="2008" name="J. Bacteriol.">
        <title>Complete genome sequence of uropathogenic Proteus mirabilis, a master of both adherence and motility.</title>
        <authorList>
            <person name="Pearson M.M."/>
            <person name="Sebaihia M."/>
            <person name="Churcher C."/>
            <person name="Quail M.A."/>
            <person name="Seshasayee A.S."/>
            <person name="Luscombe N.M."/>
            <person name="Abdellah Z."/>
            <person name="Arrosmith C."/>
            <person name="Atkin B."/>
            <person name="Chillingworth T."/>
            <person name="Hauser H."/>
            <person name="Jagels K."/>
            <person name="Moule S."/>
            <person name="Mungall K."/>
            <person name="Norbertczak H."/>
            <person name="Rabbinowitsch E."/>
            <person name="Walker D."/>
            <person name="Whithead S."/>
            <person name="Thomson N.R."/>
            <person name="Rather P.N."/>
            <person name="Parkhill J."/>
            <person name="Mobley H.L.T."/>
        </authorList>
    </citation>
    <scope>NUCLEOTIDE SEQUENCE [LARGE SCALE GENOMIC DNA]</scope>
    <source>
        <strain>HI4320</strain>
    </source>
</reference>
<keyword id="KW-0963">Cytoplasm</keyword>
<keyword id="KW-0378">Hydrolase</keyword>
<keyword id="KW-0540">Nuclease</keyword>
<keyword id="KW-1185">Reference proteome</keyword>
<keyword id="KW-0690">Ribosome biogenesis</keyword>
<accession>B4EUS0</accession>